<dbReference type="EMBL" id="AE017354">
    <property type="protein sequence ID" value="AAU26433.1"/>
    <property type="molecule type" value="Genomic_DNA"/>
</dbReference>
<dbReference type="RefSeq" id="WP_010946085.1">
    <property type="nucleotide sequence ID" value="NC_002942.5"/>
</dbReference>
<dbReference type="RefSeq" id="YP_094380.1">
    <property type="nucleotide sequence ID" value="NC_002942.5"/>
</dbReference>
<dbReference type="SMR" id="Q5ZYN6"/>
<dbReference type="STRING" id="272624.lpg0336"/>
<dbReference type="PaxDb" id="272624-lpg0336"/>
<dbReference type="GeneID" id="57034339"/>
<dbReference type="KEGG" id="lpn:lpg0336"/>
<dbReference type="PATRIC" id="fig|272624.6.peg.343"/>
<dbReference type="eggNOG" id="COG0197">
    <property type="taxonomic scope" value="Bacteria"/>
</dbReference>
<dbReference type="HOGENOM" id="CLU_078858_2_1_6"/>
<dbReference type="OrthoDB" id="9802589at2"/>
<dbReference type="Proteomes" id="UP000000609">
    <property type="component" value="Chromosome"/>
</dbReference>
<dbReference type="GO" id="GO:0022625">
    <property type="term" value="C:cytosolic large ribosomal subunit"/>
    <property type="evidence" value="ECO:0007669"/>
    <property type="project" value="TreeGrafter"/>
</dbReference>
<dbReference type="GO" id="GO:0019843">
    <property type="term" value="F:rRNA binding"/>
    <property type="evidence" value="ECO:0007669"/>
    <property type="project" value="UniProtKB-UniRule"/>
</dbReference>
<dbReference type="GO" id="GO:0003735">
    <property type="term" value="F:structural constituent of ribosome"/>
    <property type="evidence" value="ECO:0007669"/>
    <property type="project" value="InterPro"/>
</dbReference>
<dbReference type="GO" id="GO:0000049">
    <property type="term" value="F:tRNA binding"/>
    <property type="evidence" value="ECO:0007669"/>
    <property type="project" value="UniProtKB-KW"/>
</dbReference>
<dbReference type="GO" id="GO:0006412">
    <property type="term" value="P:translation"/>
    <property type="evidence" value="ECO:0007669"/>
    <property type="project" value="UniProtKB-UniRule"/>
</dbReference>
<dbReference type="CDD" id="cd01433">
    <property type="entry name" value="Ribosomal_L16_L10e"/>
    <property type="match status" value="1"/>
</dbReference>
<dbReference type="FunFam" id="3.90.1170.10:FF:000001">
    <property type="entry name" value="50S ribosomal protein L16"/>
    <property type="match status" value="1"/>
</dbReference>
<dbReference type="Gene3D" id="3.90.1170.10">
    <property type="entry name" value="Ribosomal protein L10e/L16"/>
    <property type="match status" value="1"/>
</dbReference>
<dbReference type="HAMAP" id="MF_01342">
    <property type="entry name" value="Ribosomal_uL16"/>
    <property type="match status" value="1"/>
</dbReference>
<dbReference type="InterPro" id="IPR047873">
    <property type="entry name" value="Ribosomal_uL16"/>
</dbReference>
<dbReference type="InterPro" id="IPR000114">
    <property type="entry name" value="Ribosomal_uL16_bact-type"/>
</dbReference>
<dbReference type="InterPro" id="IPR020798">
    <property type="entry name" value="Ribosomal_uL16_CS"/>
</dbReference>
<dbReference type="InterPro" id="IPR016180">
    <property type="entry name" value="Ribosomal_uL16_dom"/>
</dbReference>
<dbReference type="InterPro" id="IPR036920">
    <property type="entry name" value="Ribosomal_uL16_sf"/>
</dbReference>
<dbReference type="NCBIfam" id="TIGR01164">
    <property type="entry name" value="rplP_bact"/>
    <property type="match status" value="1"/>
</dbReference>
<dbReference type="PANTHER" id="PTHR12220">
    <property type="entry name" value="50S/60S RIBOSOMAL PROTEIN L16"/>
    <property type="match status" value="1"/>
</dbReference>
<dbReference type="PANTHER" id="PTHR12220:SF13">
    <property type="entry name" value="LARGE RIBOSOMAL SUBUNIT PROTEIN UL16M"/>
    <property type="match status" value="1"/>
</dbReference>
<dbReference type="Pfam" id="PF00252">
    <property type="entry name" value="Ribosomal_L16"/>
    <property type="match status" value="1"/>
</dbReference>
<dbReference type="PRINTS" id="PR00060">
    <property type="entry name" value="RIBOSOMALL16"/>
</dbReference>
<dbReference type="SUPFAM" id="SSF54686">
    <property type="entry name" value="Ribosomal protein L16p/L10e"/>
    <property type="match status" value="1"/>
</dbReference>
<dbReference type="PROSITE" id="PS00586">
    <property type="entry name" value="RIBOSOMAL_L16_1"/>
    <property type="match status" value="1"/>
</dbReference>
<comment type="function">
    <text evidence="1">Binds 23S rRNA and is also seen to make contacts with the A and possibly P site tRNAs.</text>
</comment>
<comment type="subunit">
    <text evidence="1">Part of the 50S ribosomal subunit.</text>
</comment>
<comment type="similarity">
    <text evidence="1">Belongs to the universal ribosomal protein uL16 family.</text>
</comment>
<gene>
    <name evidence="1" type="primary">rplP</name>
    <name type="ordered locus">lpg0336</name>
</gene>
<name>RL16_LEGPH</name>
<proteinExistence type="inferred from homology"/>
<keyword id="KW-1185">Reference proteome</keyword>
<keyword id="KW-0687">Ribonucleoprotein</keyword>
<keyword id="KW-0689">Ribosomal protein</keyword>
<keyword id="KW-0694">RNA-binding</keyword>
<keyword id="KW-0699">rRNA-binding</keyword>
<keyword id="KW-0820">tRNA-binding</keyword>
<organism>
    <name type="scientific">Legionella pneumophila subsp. pneumophila (strain Philadelphia 1 / ATCC 33152 / DSM 7513)</name>
    <dbReference type="NCBI Taxonomy" id="272624"/>
    <lineage>
        <taxon>Bacteria</taxon>
        <taxon>Pseudomonadati</taxon>
        <taxon>Pseudomonadota</taxon>
        <taxon>Gammaproteobacteria</taxon>
        <taxon>Legionellales</taxon>
        <taxon>Legionellaceae</taxon>
        <taxon>Legionella</taxon>
    </lineage>
</organism>
<accession>Q5ZYN6</accession>
<sequence>MLQPKRTKYRKQMKGRNRGLALRGSKISFGEFGLKAVERGRLTARQIEAARRAMTRHIKRGGKIWIRVFPDKPITQKPLEVRQGKGKGSVEYWVAQIQPGKVLFEMEGVSKELAMEAFDLAKAKLPFKVMFEERTVM</sequence>
<reference key="1">
    <citation type="journal article" date="2004" name="Science">
        <title>The genomic sequence of the accidental pathogen Legionella pneumophila.</title>
        <authorList>
            <person name="Chien M."/>
            <person name="Morozova I."/>
            <person name="Shi S."/>
            <person name="Sheng H."/>
            <person name="Chen J."/>
            <person name="Gomez S.M."/>
            <person name="Asamani G."/>
            <person name="Hill K."/>
            <person name="Nuara J."/>
            <person name="Feder M."/>
            <person name="Rineer J."/>
            <person name="Greenberg J.J."/>
            <person name="Steshenko V."/>
            <person name="Park S.H."/>
            <person name="Zhao B."/>
            <person name="Teplitskaya E."/>
            <person name="Edwards J.R."/>
            <person name="Pampou S."/>
            <person name="Georghiou A."/>
            <person name="Chou I.-C."/>
            <person name="Iannuccilli W."/>
            <person name="Ulz M.E."/>
            <person name="Kim D.H."/>
            <person name="Geringer-Sameth A."/>
            <person name="Goldsberry C."/>
            <person name="Morozov P."/>
            <person name="Fischer S.G."/>
            <person name="Segal G."/>
            <person name="Qu X."/>
            <person name="Rzhetsky A."/>
            <person name="Zhang P."/>
            <person name="Cayanis E."/>
            <person name="De Jong P.J."/>
            <person name="Ju J."/>
            <person name="Kalachikov S."/>
            <person name="Shuman H.A."/>
            <person name="Russo J.J."/>
        </authorList>
    </citation>
    <scope>NUCLEOTIDE SEQUENCE [LARGE SCALE GENOMIC DNA]</scope>
    <source>
        <strain>Philadelphia 1 / ATCC 33152 / DSM 7513</strain>
    </source>
</reference>
<evidence type="ECO:0000255" key="1">
    <source>
        <dbReference type="HAMAP-Rule" id="MF_01342"/>
    </source>
</evidence>
<evidence type="ECO:0000305" key="2"/>
<feature type="chain" id="PRO_0000062125" description="Large ribosomal subunit protein uL16">
    <location>
        <begin position="1"/>
        <end position="137"/>
    </location>
</feature>
<protein>
    <recommendedName>
        <fullName evidence="1">Large ribosomal subunit protein uL16</fullName>
    </recommendedName>
    <alternativeName>
        <fullName evidence="2">50S ribosomal protein L16</fullName>
    </alternativeName>
</protein>